<sequence>MKYIVVTGGVMSGLGKGITIASIGRNLKNKGYKVTAIKIDPYINIDAGTMSPYQHGEVFVLRDGGEVDLDLGNYERFLDTELTRDHNLTTGKIYQEVIAKERRGDYLGKTVQIIPHITNEIKSRIRKVAARSGADVCLVEIGGTVGDIESMPFLEAVRQMHREEPSENIVFIHVTLVMEDLQGEQKTKPSQHSVKELRALGLSPEVIVTRSKTPLQESAKEKIALFCDVPQELVISAHDAADIYEVPLEIEEQGLTTRLMKHLKLESSVEDNGWREMVSRMKSTTEEVKLAIVGKYTNLEDSYLSILEAVKHGGIDNGCKVEVNMVEAETLEEDPAEIEKLRQFDGILIPGGFGGRGTEGKMLAIKFARENDVPFLGICLGMQLAVIEFARNVVNLENANSTEFDEDTPYPVIDILPEQTGVADMGGTMRLGDYDAILKDGSLATKLYGTNYIVERHRHRYEVNPEFVDRLESFGIVFSGKNKNRMEIAEIPDKRFFFASQFHPEFRSRPGRPSPPFKGLVRAMCKYNKEKEGQ</sequence>
<gene>
    <name evidence="1" type="primary">pyrG</name>
    <name type="ordered locus">MA_3279</name>
</gene>
<accession>Q8TKW5</accession>
<evidence type="ECO:0000255" key="1">
    <source>
        <dbReference type="HAMAP-Rule" id="MF_01227"/>
    </source>
</evidence>
<keyword id="KW-0067">ATP-binding</keyword>
<keyword id="KW-0315">Glutamine amidotransferase</keyword>
<keyword id="KW-0436">Ligase</keyword>
<keyword id="KW-0460">Magnesium</keyword>
<keyword id="KW-0479">Metal-binding</keyword>
<keyword id="KW-0547">Nucleotide-binding</keyword>
<keyword id="KW-0665">Pyrimidine biosynthesis</keyword>
<keyword id="KW-1185">Reference proteome</keyword>
<organism>
    <name type="scientific">Methanosarcina acetivorans (strain ATCC 35395 / DSM 2834 / JCM 12185 / C2A)</name>
    <dbReference type="NCBI Taxonomy" id="188937"/>
    <lineage>
        <taxon>Archaea</taxon>
        <taxon>Methanobacteriati</taxon>
        <taxon>Methanobacteriota</taxon>
        <taxon>Stenosarchaea group</taxon>
        <taxon>Methanomicrobia</taxon>
        <taxon>Methanosarcinales</taxon>
        <taxon>Methanosarcinaceae</taxon>
        <taxon>Methanosarcina</taxon>
    </lineage>
</organism>
<name>PYRG_METAC</name>
<reference key="1">
    <citation type="journal article" date="2002" name="Genome Res.">
        <title>The genome of Methanosarcina acetivorans reveals extensive metabolic and physiological diversity.</title>
        <authorList>
            <person name="Galagan J.E."/>
            <person name="Nusbaum C."/>
            <person name="Roy A."/>
            <person name="Endrizzi M.G."/>
            <person name="Macdonald P."/>
            <person name="FitzHugh W."/>
            <person name="Calvo S."/>
            <person name="Engels R."/>
            <person name="Smirnov S."/>
            <person name="Atnoor D."/>
            <person name="Brown A."/>
            <person name="Allen N."/>
            <person name="Naylor J."/>
            <person name="Stange-Thomann N."/>
            <person name="DeArellano K."/>
            <person name="Johnson R."/>
            <person name="Linton L."/>
            <person name="McEwan P."/>
            <person name="McKernan K."/>
            <person name="Talamas J."/>
            <person name="Tirrell A."/>
            <person name="Ye W."/>
            <person name="Zimmer A."/>
            <person name="Barber R.D."/>
            <person name="Cann I."/>
            <person name="Graham D.E."/>
            <person name="Grahame D.A."/>
            <person name="Guss A.M."/>
            <person name="Hedderich R."/>
            <person name="Ingram-Smith C."/>
            <person name="Kuettner H.C."/>
            <person name="Krzycki J.A."/>
            <person name="Leigh J.A."/>
            <person name="Li W."/>
            <person name="Liu J."/>
            <person name="Mukhopadhyay B."/>
            <person name="Reeve J.N."/>
            <person name="Smith K."/>
            <person name="Springer T.A."/>
            <person name="Umayam L.A."/>
            <person name="White O."/>
            <person name="White R.H."/>
            <person name="de Macario E.C."/>
            <person name="Ferry J.G."/>
            <person name="Jarrell K.F."/>
            <person name="Jing H."/>
            <person name="Macario A.J.L."/>
            <person name="Paulsen I.T."/>
            <person name="Pritchett M."/>
            <person name="Sowers K.R."/>
            <person name="Swanson R.V."/>
            <person name="Zinder S.H."/>
            <person name="Lander E."/>
            <person name="Metcalf W.W."/>
            <person name="Birren B."/>
        </authorList>
    </citation>
    <scope>NUCLEOTIDE SEQUENCE [LARGE SCALE GENOMIC DNA]</scope>
    <source>
        <strain>ATCC 35395 / DSM 2834 / JCM 12185 / C2A</strain>
    </source>
</reference>
<dbReference type="EC" id="6.3.4.2" evidence="1"/>
<dbReference type="EMBL" id="AE010299">
    <property type="protein sequence ID" value="AAM06649.1"/>
    <property type="molecule type" value="Genomic_DNA"/>
</dbReference>
<dbReference type="RefSeq" id="WP_011023212.1">
    <property type="nucleotide sequence ID" value="NC_003552.1"/>
</dbReference>
<dbReference type="SMR" id="Q8TKW5"/>
<dbReference type="FunCoup" id="Q8TKW5">
    <property type="interactions" value="214"/>
</dbReference>
<dbReference type="STRING" id="188937.MA_3279"/>
<dbReference type="EnsemblBacteria" id="AAM06649">
    <property type="protein sequence ID" value="AAM06649"/>
    <property type="gene ID" value="MA_3279"/>
</dbReference>
<dbReference type="GeneID" id="1475172"/>
<dbReference type="KEGG" id="mac:MA_3279"/>
<dbReference type="HOGENOM" id="CLU_011675_5_0_2"/>
<dbReference type="InParanoid" id="Q8TKW5"/>
<dbReference type="OrthoDB" id="52769at2157"/>
<dbReference type="PhylomeDB" id="Q8TKW5"/>
<dbReference type="UniPathway" id="UPA00159">
    <property type="reaction ID" value="UER00277"/>
</dbReference>
<dbReference type="Proteomes" id="UP000002487">
    <property type="component" value="Chromosome"/>
</dbReference>
<dbReference type="GO" id="GO:0005524">
    <property type="term" value="F:ATP binding"/>
    <property type="evidence" value="ECO:0007669"/>
    <property type="project" value="UniProtKB-KW"/>
</dbReference>
<dbReference type="GO" id="GO:0003883">
    <property type="term" value="F:CTP synthase activity"/>
    <property type="evidence" value="ECO:0000318"/>
    <property type="project" value="GO_Central"/>
</dbReference>
<dbReference type="GO" id="GO:0004359">
    <property type="term" value="F:glutaminase activity"/>
    <property type="evidence" value="ECO:0007669"/>
    <property type="project" value="RHEA"/>
</dbReference>
<dbReference type="GO" id="GO:0042802">
    <property type="term" value="F:identical protein binding"/>
    <property type="evidence" value="ECO:0000318"/>
    <property type="project" value="GO_Central"/>
</dbReference>
<dbReference type="GO" id="GO:0046872">
    <property type="term" value="F:metal ion binding"/>
    <property type="evidence" value="ECO:0007669"/>
    <property type="project" value="UniProtKB-KW"/>
</dbReference>
<dbReference type="GO" id="GO:0044210">
    <property type="term" value="P:'de novo' CTP biosynthetic process"/>
    <property type="evidence" value="ECO:0007669"/>
    <property type="project" value="UniProtKB-UniRule"/>
</dbReference>
<dbReference type="GO" id="GO:0006241">
    <property type="term" value="P:CTP biosynthetic process"/>
    <property type="evidence" value="ECO:0000318"/>
    <property type="project" value="GO_Central"/>
</dbReference>
<dbReference type="GO" id="GO:0019856">
    <property type="term" value="P:pyrimidine nucleobase biosynthetic process"/>
    <property type="evidence" value="ECO:0000318"/>
    <property type="project" value="GO_Central"/>
</dbReference>
<dbReference type="CDD" id="cd03113">
    <property type="entry name" value="CTPS_N"/>
    <property type="match status" value="1"/>
</dbReference>
<dbReference type="CDD" id="cd01746">
    <property type="entry name" value="GATase1_CTP_Synthase"/>
    <property type="match status" value="1"/>
</dbReference>
<dbReference type="FunFam" id="3.40.50.300:FF:000009">
    <property type="entry name" value="CTP synthase"/>
    <property type="match status" value="1"/>
</dbReference>
<dbReference type="FunFam" id="3.40.50.880:FF:000002">
    <property type="entry name" value="CTP synthase"/>
    <property type="match status" value="1"/>
</dbReference>
<dbReference type="Gene3D" id="3.40.50.880">
    <property type="match status" value="1"/>
</dbReference>
<dbReference type="Gene3D" id="3.40.50.300">
    <property type="entry name" value="P-loop containing nucleotide triphosphate hydrolases"/>
    <property type="match status" value="1"/>
</dbReference>
<dbReference type="HAMAP" id="MF_01227">
    <property type="entry name" value="PyrG"/>
    <property type="match status" value="1"/>
</dbReference>
<dbReference type="InterPro" id="IPR029062">
    <property type="entry name" value="Class_I_gatase-like"/>
</dbReference>
<dbReference type="InterPro" id="IPR004468">
    <property type="entry name" value="CTP_synthase"/>
</dbReference>
<dbReference type="InterPro" id="IPR017456">
    <property type="entry name" value="CTP_synthase_N"/>
</dbReference>
<dbReference type="InterPro" id="IPR017926">
    <property type="entry name" value="GATASE"/>
</dbReference>
<dbReference type="InterPro" id="IPR033828">
    <property type="entry name" value="GATase1_CTP_Synthase"/>
</dbReference>
<dbReference type="InterPro" id="IPR027417">
    <property type="entry name" value="P-loop_NTPase"/>
</dbReference>
<dbReference type="NCBIfam" id="NF003792">
    <property type="entry name" value="PRK05380.1"/>
    <property type="match status" value="1"/>
</dbReference>
<dbReference type="NCBIfam" id="TIGR00337">
    <property type="entry name" value="PyrG"/>
    <property type="match status" value="1"/>
</dbReference>
<dbReference type="PANTHER" id="PTHR11550">
    <property type="entry name" value="CTP SYNTHASE"/>
    <property type="match status" value="1"/>
</dbReference>
<dbReference type="PANTHER" id="PTHR11550:SF0">
    <property type="entry name" value="CTP SYNTHASE-RELATED"/>
    <property type="match status" value="1"/>
</dbReference>
<dbReference type="Pfam" id="PF06418">
    <property type="entry name" value="CTP_synth_N"/>
    <property type="match status" value="1"/>
</dbReference>
<dbReference type="Pfam" id="PF00117">
    <property type="entry name" value="GATase"/>
    <property type="match status" value="1"/>
</dbReference>
<dbReference type="SUPFAM" id="SSF52317">
    <property type="entry name" value="Class I glutamine amidotransferase-like"/>
    <property type="match status" value="1"/>
</dbReference>
<dbReference type="SUPFAM" id="SSF52540">
    <property type="entry name" value="P-loop containing nucleoside triphosphate hydrolases"/>
    <property type="match status" value="1"/>
</dbReference>
<dbReference type="PROSITE" id="PS51273">
    <property type="entry name" value="GATASE_TYPE_1"/>
    <property type="match status" value="1"/>
</dbReference>
<feature type="chain" id="PRO_0000138259" description="CTP synthase">
    <location>
        <begin position="1"/>
        <end position="534"/>
    </location>
</feature>
<feature type="domain" description="Glutamine amidotransferase type-1" evidence="1">
    <location>
        <begin position="289"/>
        <end position="530"/>
    </location>
</feature>
<feature type="region of interest" description="Amidoligase domain" evidence="1">
    <location>
        <begin position="1"/>
        <end position="265"/>
    </location>
</feature>
<feature type="active site" description="Nucleophile; for glutamine hydrolysis" evidence="1">
    <location>
        <position position="379"/>
    </location>
</feature>
<feature type="active site" evidence="1">
    <location>
        <position position="503"/>
    </location>
</feature>
<feature type="active site" evidence="1">
    <location>
        <position position="505"/>
    </location>
</feature>
<feature type="binding site" evidence="1">
    <location>
        <position position="12"/>
    </location>
    <ligand>
        <name>CTP</name>
        <dbReference type="ChEBI" id="CHEBI:37563"/>
        <note>allosteric inhibitor</note>
    </ligand>
</feature>
<feature type="binding site" evidence="1">
    <location>
        <position position="12"/>
    </location>
    <ligand>
        <name>UTP</name>
        <dbReference type="ChEBI" id="CHEBI:46398"/>
    </ligand>
</feature>
<feature type="binding site" evidence="1">
    <location>
        <begin position="13"/>
        <end position="18"/>
    </location>
    <ligand>
        <name>ATP</name>
        <dbReference type="ChEBI" id="CHEBI:30616"/>
    </ligand>
</feature>
<feature type="binding site" evidence="1">
    <location>
        <position position="53"/>
    </location>
    <ligand>
        <name>L-glutamine</name>
        <dbReference type="ChEBI" id="CHEBI:58359"/>
    </ligand>
</feature>
<feature type="binding site" evidence="1">
    <location>
        <position position="70"/>
    </location>
    <ligand>
        <name>ATP</name>
        <dbReference type="ChEBI" id="CHEBI:30616"/>
    </ligand>
</feature>
<feature type="binding site" evidence="1">
    <location>
        <position position="70"/>
    </location>
    <ligand>
        <name>Mg(2+)</name>
        <dbReference type="ChEBI" id="CHEBI:18420"/>
    </ligand>
</feature>
<feature type="binding site" evidence="1">
    <location>
        <position position="140"/>
    </location>
    <ligand>
        <name>Mg(2+)</name>
        <dbReference type="ChEBI" id="CHEBI:18420"/>
    </ligand>
</feature>
<feature type="binding site" evidence="1">
    <location>
        <begin position="147"/>
        <end position="149"/>
    </location>
    <ligand>
        <name>CTP</name>
        <dbReference type="ChEBI" id="CHEBI:37563"/>
        <note>allosteric inhibitor</note>
    </ligand>
</feature>
<feature type="binding site" evidence="1">
    <location>
        <begin position="186"/>
        <end position="191"/>
    </location>
    <ligand>
        <name>CTP</name>
        <dbReference type="ChEBI" id="CHEBI:37563"/>
        <note>allosteric inhibitor</note>
    </ligand>
</feature>
<feature type="binding site" evidence="1">
    <location>
        <begin position="186"/>
        <end position="191"/>
    </location>
    <ligand>
        <name>UTP</name>
        <dbReference type="ChEBI" id="CHEBI:46398"/>
    </ligand>
</feature>
<feature type="binding site" evidence="1">
    <location>
        <position position="222"/>
    </location>
    <ligand>
        <name>CTP</name>
        <dbReference type="ChEBI" id="CHEBI:37563"/>
        <note>allosteric inhibitor</note>
    </ligand>
</feature>
<feature type="binding site" evidence="1">
    <location>
        <position position="222"/>
    </location>
    <ligand>
        <name>UTP</name>
        <dbReference type="ChEBI" id="CHEBI:46398"/>
    </ligand>
</feature>
<feature type="binding site" evidence="1">
    <location>
        <position position="352"/>
    </location>
    <ligand>
        <name>L-glutamine</name>
        <dbReference type="ChEBI" id="CHEBI:58359"/>
    </ligand>
</feature>
<feature type="binding site" evidence="1">
    <location>
        <begin position="380"/>
        <end position="383"/>
    </location>
    <ligand>
        <name>L-glutamine</name>
        <dbReference type="ChEBI" id="CHEBI:58359"/>
    </ligand>
</feature>
<feature type="binding site" evidence="1">
    <location>
        <position position="403"/>
    </location>
    <ligand>
        <name>L-glutamine</name>
        <dbReference type="ChEBI" id="CHEBI:58359"/>
    </ligand>
</feature>
<feature type="binding site" evidence="1">
    <location>
        <position position="460"/>
    </location>
    <ligand>
        <name>L-glutamine</name>
        <dbReference type="ChEBI" id="CHEBI:58359"/>
    </ligand>
</feature>
<proteinExistence type="inferred from homology"/>
<comment type="function">
    <text evidence="1">Catalyzes the ATP-dependent amination of UTP to CTP with either L-glutamine or ammonia as the source of nitrogen. Regulates intracellular CTP levels through interactions with the four ribonucleotide triphosphates.</text>
</comment>
<comment type="catalytic activity">
    <reaction evidence="1">
        <text>UTP + L-glutamine + ATP + H2O = CTP + L-glutamate + ADP + phosphate + 2 H(+)</text>
        <dbReference type="Rhea" id="RHEA:26426"/>
        <dbReference type="ChEBI" id="CHEBI:15377"/>
        <dbReference type="ChEBI" id="CHEBI:15378"/>
        <dbReference type="ChEBI" id="CHEBI:29985"/>
        <dbReference type="ChEBI" id="CHEBI:30616"/>
        <dbReference type="ChEBI" id="CHEBI:37563"/>
        <dbReference type="ChEBI" id="CHEBI:43474"/>
        <dbReference type="ChEBI" id="CHEBI:46398"/>
        <dbReference type="ChEBI" id="CHEBI:58359"/>
        <dbReference type="ChEBI" id="CHEBI:456216"/>
        <dbReference type="EC" id="6.3.4.2"/>
    </reaction>
</comment>
<comment type="catalytic activity">
    <reaction evidence="1">
        <text>L-glutamine + H2O = L-glutamate + NH4(+)</text>
        <dbReference type="Rhea" id="RHEA:15889"/>
        <dbReference type="ChEBI" id="CHEBI:15377"/>
        <dbReference type="ChEBI" id="CHEBI:28938"/>
        <dbReference type="ChEBI" id="CHEBI:29985"/>
        <dbReference type="ChEBI" id="CHEBI:58359"/>
    </reaction>
</comment>
<comment type="catalytic activity">
    <reaction evidence="1">
        <text>UTP + NH4(+) + ATP = CTP + ADP + phosphate + 2 H(+)</text>
        <dbReference type="Rhea" id="RHEA:16597"/>
        <dbReference type="ChEBI" id="CHEBI:15378"/>
        <dbReference type="ChEBI" id="CHEBI:28938"/>
        <dbReference type="ChEBI" id="CHEBI:30616"/>
        <dbReference type="ChEBI" id="CHEBI:37563"/>
        <dbReference type="ChEBI" id="CHEBI:43474"/>
        <dbReference type="ChEBI" id="CHEBI:46398"/>
        <dbReference type="ChEBI" id="CHEBI:456216"/>
    </reaction>
</comment>
<comment type="activity regulation">
    <text evidence="1">Allosterically activated by GTP, when glutamine is the substrate; GTP has no effect on the reaction when ammonia is the substrate. The allosteric effector GTP functions by stabilizing the protein conformation that binds the tetrahedral intermediate(s) formed during glutamine hydrolysis. Inhibited by the product CTP, via allosteric rather than competitive inhibition.</text>
</comment>
<comment type="pathway">
    <text evidence="1">Pyrimidine metabolism; CTP biosynthesis via de novo pathway; CTP from UDP: step 2/2.</text>
</comment>
<comment type="subunit">
    <text evidence="1">Homotetramer.</text>
</comment>
<comment type="miscellaneous">
    <text evidence="1">CTPSs have evolved a hybrid strategy for distinguishing between UTP and CTP. The overlapping regions of the product feedback inhibitory and substrate sites recognize a common feature in both compounds, the triphosphate moiety. To differentiate isosteric substrate and product pyrimidine rings, an additional pocket far from the expected kinase/ligase catalytic site, specifically recognizes the cytosine and ribose portions of the product inhibitor.</text>
</comment>
<comment type="similarity">
    <text evidence="1">Belongs to the CTP synthase family.</text>
</comment>
<protein>
    <recommendedName>
        <fullName evidence="1">CTP synthase</fullName>
        <ecNumber evidence="1">6.3.4.2</ecNumber>
    </recommendedName>
    <alternativeName>
        <fullName evidence="1">Cytidine 5'-triphosphate synthase</fullName>
    </alternativeName>
    <alternativeName>
        <fullName evidence="1">Cytidine triphosphate synthetase</fullName>
        <shortName evidence="1">CTP synthetase</shortName>
        <shortName evidence="1">CTPS</shortName>
    </alternativeName>
    <alternativeName>
        <fullName evidence="1">UTP--ammonia ligase</fullName>
    </alternativeName>
</protein>